<protein>
    <recommendedName>
        <fullName evidence="1">Nucleotide-binding protein CMM_2802</fullName>
    </recommendedName>
</protein>
<name>Y2802_CLAM3</name>
<comment type="function">
    <text evidence="1">Nucleotide-binding protein.</text>
</comment>
<comment type="similarity">
    <text evidence="1">Belongs to the YajQ family.</text>
</comment>
<keyword id="KW-0547">Nucleotide-binding</keyword>
<sequence length="162" mass="18116">MADSSFDVVSKVDRMEADNAVHQTQKEVEQRYDFKNVGASIEWSGDTILMKASSEERVKAILDVLQTKMIKRGIGLKSLEEGEPFASGKEYRIEVTLKQGIDQANAKKIGKIIRDEGPKGIKSRVEGDELRVSSKSRDDLQQTIALLKGADVDLDLQFVNFR</sequence>
<feature type="chain" id="PRO_1000051725" description="Nucleotide-binding protein CMM_2802">
    <location>
        <begin position="1"/>
        <end position="162"/>
    </location>
</feature>
<accession>A5CUU9</accession>
<proteinExistence type="inferred from homology"/>
<reference key="1">
    <citation type="journal article" date="2008" name="J. Bacteriol.">
        <title>The genome sequence of the tomato-pathogenic actinomycete Clavibacter michiganensis subsp. michiganensis NCPPB382 reveals a large island involved in pathogenicity.</title>
        <authorList>
            <person name="Gartemann K.-H."/>
            <person name="Abt B."/>
            <person name="Bekel T."/>
            <person name="Burger A."/>
            <person name="Engemann J."/>
            <person name="Fluegel M."/>
            <person name="Gaigalat L."/>
            <person name="Goesmann A."/>
            <person name="Graefen I."/>
            <person name="Kalinowski J."/>
            <person name="Kaup O."/>
            <person name="Kirchner O."/>
            <person name="Krause L."/>
            <person name="Linke B."/>
            <person name="McHardy A."/>
            <person name="Meyer F."/>
            <person name="Pohle S."/>
            <person name="Rueckert C."/>
            <person name="Schneiker S."/>
            <person name="Zellermann E.-M."/>
            <person name="Puehler A."/>
            <person name="Eichenlaub R."/>
            <person name="Kaiser O."/>
            <person name="Bartels D."/>
        </authorList>
    </citation>
    <scope>NUCLEOTIDE SEQUENCE [LARGE SCALE GENOMIC DNA]</scope>
    <source>
        <strain>NCPPB 382</strain>
    </source>
</reference>
<evidence type="ECO:0000255" key="1">
    <source>
        <dbReference type="HAMAP-Rule" id="MF_00632"/>
    </source>
</evidence>
<organism>
    <name type="scientific">Clavibacter michiganensis subsp. michiganensis (strain NCPPB 382)</name>
    <dbReference type="NCBI Taxonomy" id="443906"/>
    <lineage>
        <taxon>Bacteria</taxon>
        <taxon>Bacillati</taxon>
        <taxon>Actinomycetota</taxon>
        <taxon>Actinomycetes</taxon>
        <taxon>Micrococcales</taxon>
        <taxon>Microbacteriaceae</taxon>
        <taxon>Clavibacter</taxon>
    </lineage>
</organism>
<gene>
    <name type="ordered locus">CMM_2802</name>
</gene>
<dbReference type="EMBL" id="AM711867">
    <property type="protein sequence ID" value="CAN02887.1"/>
    <property type="molecule type" value="Genomic_DNA"/>
</dbReference>
<dbReference type="RefSeq" id="WP_012039490.1">
    <property type="nucleotide sequence ID" value="NC_009480.1"/>
</dbReference>
<dbReference type="SMR" id="A5CUU9"/>
<dbReference type="KEGG" id="cmi:CMM_2802"/>
<dbReference type="eggNOG" id="COG1666">
    <property type="taxonomic scope" value="Bacteria"/>
</dbReference>
<dbReference type="HOGENOM" id="CLU_099839_0_0_11"/>
<dbReference type="OrthoDB" id="9801447at2"/>
<dbReference type="Proteomes" id="UP000001564">
    <property type="component" value="Chromosome"/>
</dbReference>
<dbReference type="GO" id="GO:0005829">
    <property type="term" value="C:cytosol"/>
    <property type="evidence" value="ECO:0007669"/>
    <property type="project" value="TreeGrafter"/>
</dbReference>
<dbReference type="GO" id="GO:0000166">
    <property type="term" value="F:nucleotide binding"/>
    <property type="evidence" value="ECO:0007669"/>
    <property type="project" value="TreeGrafter"/>
</dbReference>
<dbReference type="CDD" id="cd11740">
    <property type="entry name" value="YajQ_like"/>
    <property type="match status" value="1"/>
</dbReference>
<dbReference type="FunFam" id="3.30.70.860:FF:000004">
    <property type="entry name" value="UPF0234 protein AWC22_11905"/>
    <property type="match status" value="1"/>
</dbReference>
<dbReference type="Gene3D" id="3.30.70.860">
    <property type="match status" value="1"/>
</dbReference>
<dbReference type="Gene3D" id="3.30.70.990">
    <property type="entry name" value="YajQ-like, domain 2"/>
    <property type="match status" value="1"/>
</dbReference>
<dbReference type="HAMAP" id="MF_00632">
    <property type="entry name" value="YajQ"/>
    <property type="match status" value="1"/>
</dbReference>
<dbReference type="InterPro" id="IPR007551">
    <property type="entry name" value="DUF520"/>
</dbReference>
<dbReference type="InterPro" id="IPR035571">
    <property type="entry name" value="UPF0234-like_C"/>
</dbReference>
<dbReference type="InterPro" id="IPR035570">
    <property type="entry name" value="UPF0234_N"/>
</dbReference>
<dbReference type="InterPro" id="IPR036183">
    <property type="entry name" value="YajQ-like_sf"/>
</dbReference>
<dbReference type="NCBIfam" id="NF003819">
    <property type="entry name" value="PRK05412.1"/>
    <property type="match status" value="1"/>
</dbReference>
<dbReference type="PANTHER" id="PTHR30476">
    <property type="entry name" value="UPF0234 PROTEIN YAJQ"/>
    <property type="match status" value="1"/>
</dbReference>
<dbReference type="PANTHER" id="PTHR30476:SF0">
    <property type="entry name" value="UPF0234 PROTEIN YAJQ"/>
    <property type="match status" value="1"/>
</dbReference>
<dbReference type="Pfam" id="PF04461">
    <property type="entry name" value="DUF520"/>
    <property type="match status" value="1"/>
</dbReference>
<dbReference type="SUPFAM" id="SSF89963">
    <property type="entry name" value="YajQ-like"/>
    <property type="match status" value="2"/>
</dbReference>